<protein>
    <recommendedName>
        <fullName evidence="1">5'-nucleotidase SurE</fullName>
        <ecNumber evidence="1">3.1.3.5</ecNumber>
    </recommendedName>
    <alternativeName>
        <fullName evidence="1">Nucleoside 5'-monophosphate phosphohydrolase</fullName>
    </alternativeName>
</protein>
<feature type="chain" id="PRO_0000235622" description="5'-nucleotidase SurE">
    <location>
        <begin position="1"/>
        <end position="252"/>
    </location>
</feature>
<feature type="binding site" evidence="1">
    <location>
        <position position="8"/>
    </location>
    <ligand>
        <name>a divalent metal cation</name>
        <dbReference type="ChEBI" id="CHEBI:60240"/>
    </ligand>
</feature>
<feature type="binding site" evidence="1">
    <location>
        <position position="9"/>
    </location>
    <ligand>
        <name>a divalent metal cation</name>
        <dbReference type="ChEBI" id="CHEBI:60240"/>
    </ligand>
</feature>
<feature type="binding site" evidence="1">
    <location>
        <position position="39"/>
    </location>
    <ligand>
        <name>a divalent metal cation</name>
        <dbReference type="ChEBI" id="CHEBI:60240"/>
    </ligand>
</feature>
<feature type="binding site" evidence="1">
    <location>
        <position position="91"/>
    </location>
    <ligand>
        <name>a divalent metal cation</name>
        <dbReference type="ChEBI" id="CHEBI:60240"/>
    </ligand>
</feature>
<reference key="1">
    <citation type="journal article" date="2004" name="Nat. Genet.">
        <title>Evidence in the Legionella pneumophila genome for exploitation of host cell functions and high genome plasticity.</title>
        <authorList>
            <person name="Cazalet C."/>
            <person name="Rusniok C."/>
            <person name="Brueggemann H."/>
            <person name="Zidane N."/>
            <person name="Magnier A."/>
            <person name="Ma L."/>
            <person name="Tichit M."/>
            <person name="Jarraud S."/>
            <person name="Bouchier C."/>
            <person name="Vandenesch F."/>
            <person name="Kunst F."/>
            <person name="Etienne J."/>
            <person name="Glaser P."/>
            <person name="Buchrieser C."/>
        </authorList>
    </citation>
    <scope>NUCLEOTIDE SEQUENCE [LARGE SCALE GENOMIC DNA]</scope>
    <source>
        <strain>Paris</strain>
    </source>
</reference>
<proteinExistence type="inferred from homology"/>
<sequence length="252" mass="27054">MKILVSNDDGVLAPGIKILANELSTLGEVKVVAPDRNRSGASNSLTLTQPLRVKQLDNGYYSVDGTPTDCVHLALTGFLEPIADIVVSGINEGANLGDDVLYSGTVAAAMEGRYLGLPAIAISMVGDNIQYYETAAIIAKQLVIKLSANKLPSQTILNVNVPDLPLSQIRGLQVTRLGTRHSAEPIIKEYDPRGRPIYWVGPPGIEADAGAGTDFFAIKTGHVSITPLHLDMTHYKLFDHLSNLLNEICIEN</sequence>
<gene>
    <name evidence="1" type="primary">surE</name>
    <name type="ordered locus">lpp1245</name>
</gene>
<comment type="function">
    <text evidence="1">Nucleotidase that shows phosphatase activity on nucleoside 5'-monophosphates.</text>
</comment>
<comment type="catalytic activity">
    <reaction evidence="1">
        <text>a ribonucleoside 5'-phosphate + H2O = a ribonucleoside + phosphate</text>
        <dbReference type="Rhea" id="RHEA:12484"/>
        <dbReference type="ChEBI" id="CHEBI:15377"/>
        <dbReference type="ChEBI" id="CHEBI:18254"/>
        <dbReference type="ChEBI" id="CHEBI:43474"/>
        <dbReference type="ChEBI" id="CHEBI:58043"/>
        <dbReference type="EC" id="3.1.3.5"/>
    </reaction>
</comment>
<comment type="cofactor">
    <cofactor evidence="1">
        <name>a divalent metal cation</name>
        <dbReference type="ChEBI" id="CHEBI:60240"/>
    </cofactor>
    <text evidence="1">Binds 1 divalent metal cation per subunit.</text>
</comment>
<comment type="subcellular location">
    <subcellularLocation>
        <location evidence="1">Cytoplasm</location>
    </subcellularLocation>
</comment>
<comment type="similarity">
    <text evidence="1">Belongs to the SurE nucleotidase family.</text>
</comment>
<organism>
    <name type="scientific">Legionella pneumophila (strain Paris)</name>
    <dbReference type="NCBI Taxonomy" id="297246"/>
    <lineage>
        <taxon>Bacteria</taxon>
        <taxon>Pseudomonadati</taxon>
        <taxon>Pseudomonadota</taxon>
        <taxon>Gammaproteobacteria</taxon>
        <taxon>Legionellales</taxon>
        <taxon>Legionellaceae</taxon>
        <taxon>Legionella</taxon>
    </lineage>
</organism>
<accession>Q5X5S5</accession>
<evidence type="ECO:0000255" key="1">
    <source>
        <dbReference type="HAMAP-Rule" id="MF_00060"/>
    </source>
</evidence>
<name>SURE_LEGPA</name>
<dbReference type="EC" id="3.1.3.5" evidence="1"/>
<dbReference type="EMBL" id="CR628336">
    <property type="protein sequence ID" value="CAH12396.1"/>
    <property type="molecule type" value="Genomic_DNA"/>
</dbReference>
<dbReference type="RefSeq" id="WP_011213594.1">
    <property type="nucleotide sequence ID" value="NC_006368.1"/>
</dbReference>
<dbReference type="SMR" id="Q5X5S5"/>
<dbReference type="KEGG" id="lpp:lpp1245"/>
<dbReference type="LegioList" id="lpp1245"/>
<dbReference type="HOGENOM" id="CLU_045192_1_2_6"/>
<dbReference type="GO" id="GO:0005737">
    <property type="term" value="C:cytoplasm"/>
    <property type="evidence" value="ECO:0007669"/>
    <property type="project" value="UniProtKB-SubCell"/>
</dbReference>
<dbReference type="GO" id="GO:0008254">
    <property type="term" value="F:3'-nucleotidase activity"/>
    <property type="evidence" value="ECO:0007669"/>
    <property type="project" value="TreeGrafter"/>
</dbReference>
<dbReference type="GO" id="GO:0008253">
    <property type="term" value="F:5'-nucleotidase activity"/>
    <property type="evidence" value="ECO:0007669"/>
    <property type="project" value="UniProtKB-UniRule"/>
</dbReference>
<dbReference type="GO" id="GO:0004309">
    <property type="term" value="F:exopolyphosphatase activity"/>
    <property type="evidence" value="ECO:0007669"/>
    <property type="project" value="TreeGrafter"/>
</dbReference>
<dbReference type="GO" id="GO:0046872">
    <property type="term" value="F:metal ion binding"/>
    <property type="evidence" value="ECO:0007669"/>
    <property type="project" value="UniProtKB-UniRule"/>
</dbReference>
<dbReference type="GO" id="GO:0000166">
    <property type="term" value="F:nucleotide binding"/>
    <property type="evidence" value="ECO:0007669"/>
    <property type="project" value="UniProtKB-KW"/>
</dbReference>
<dbReference type="FunFam" id="3.40.1210.10:FF:000001">
    <property type="entry name" value="5'/3'-nucleotidase SurE"/>
    <property type="match status" value="1"/>
</dbReference>
<dbReference type="Gene3D" id="3.40.1210.10">
    <property type="entry name" value="Survival protein SurE-like phosphatase/nucleotidase"/>
    <property type="match status" value="1"/>
</dbReference>
<dbReference type="HAMAP" id="MF_00060">
    <property type="entry name" value="SurE"/>
    <property type="match status" value="1"/>
</dbReference>
<dbReference type="InterPro" id="IPR030048">
    <property type="entry name" value="SurE"/>
</dbReference>
<dbReference type="InterPro" id="IPR002828">
    <property type="entry name" value="SurE-like_Pase/nucleotidase"/>
</dbReference>
<dbReference type="InterPro" id="IPR036523">
    <property type="entry name" value="SurE-like_sf"/>
</dbReference>
<dbReference type="NCBIfam" id="NF001489">
    <property type="entry name" value="PRK00346.1-3"/>
    <property type="match status" value="1"/>
</dbReference>
<dbReference type="NCBIfam" id="NF001490">
    <property type="entry name" value="PRK00346.1-4"/>
    <property type="match status" value="1"/>
</dbReference>
<dbReference type="NCBIfam" id="TIGR00087">
    <property type="entry name" value="surE"/>
    <property type="match status" value="1"/>
</dbReference>
<dbReference type="PANTHER" id="PTHR30457">
    <property type="entry name" value="5'-NUCLEOTIDASE SURE"/>
    <property type="match status" value="1"/>
</dbReference>
<dbReference type="PANTHER" id="PTHR30457:SF12">
    <property type="entry name" value="5'_3'-NUCLEOTIDASE SURE"/>
    <property type="match status" value="1"/>
</dbReference>
<dbReference type="Pfam" id="PF01975">
    <property type="entry name" value="SurE"/>
    <property type="match status" value="1"/>
</dbReference>
<dbReference type="SUPFAM" id="SSF64167">
    <property type="entry name" value="SurE-like"/>
    <property type="match status" value="1"/>
</dbReference>
<keyword id="KW-0963">Cytoplasm</keyword>
<keyword id="KW-0378">Hydrolase</keyword>
<keyword id="KW-0479">Metal-binding</keyword>
<keyword id="KW-0547">Nucleotide-binding</keyword>